<sequence length="235" mass="25400">MCHDTAPALFPRTASTGSIDGAICALCYAGATRGPRLLVLPDIYGCNAFYRGYAAYLAEQGAGEVLLVDPFAAFGELATVTREAAFQRRHRLADRAYVEELIDFIDGQRIEGVVGFCLGGLFVFELARQQVVSRLVAYYPFPQGLENRDPLDVPFDYLPALRSRHTVIVGDDDALLGTQNLQRLQAQARANDAIDLHIMNGAGHGFLADLESPDTARAAVAKRGLRIGTTTLLGG</sequence>
<proteinExistence type="inferred from homology"/>
<dbReference type="EC" id="3.1.1.45"/>
<dbReference type="EMBL" id="U16782">
    <property type="protein sequence ID" value="AAC44728.1"/>
    <property type="molecule type" value="Genomic_DNA"/>
</dbReference>
<dbReference type="EMBL" id="AY365053">
    <property type="protein sequence ID" value="AAR31045.1"/>
    <property type="molecule type" value="Genomic_DNA"/>
</dbReference>
<dbReference type="EMBL" id="CP000093">
    <property type="protein sequence ID" value="AAZ65770.1"/>
    <property type="molecule type" value="Genomic_DNA"/>
</dbReference>
<dbReference type="RefSeq" id="WP_011178392.1">
    <property type="nucleotide sequence ID" value="NZ_AY365053.1"/>
</dbReference>
<dbReference type="SMR" id="P94136"/>
<dbReference type="ESTHER" id="alceu-tfe2">
    <property type="family name" value="Dienelactone_hydrolase"/>
</dbReference>
<dbReference type="KEGG" id="reu:Reut_D6472"/>
<dbReference type="HOGENOM" id="CLU_1119605_0_0_4"/>
<dbReference type="OrthoDB" id="9134651at2"/>
<dbReference type="UniPathway" id="UPA00083"/>
<dbReference type="GO" id="GO:0008806">
    <property type="term" value="F:carboxymethylenebutenolidase activity"/>
    <property type="evidence" value="ECO:0007669"/>
    <property type="project" value="UniProtKB-EC"/>
</dbReference>
<dbReference type="GO" id="GO:0009056">
    <property type="term" value="P:catabolic process"/>
    <property type="evidence" value="ECO:0007669"/>
    <property type="project" value="UniProtKB-KW"/>
</dbReference>
<dbReference type="Gene3D" id="3.40.50.1820">
    <property type="entry name" value="alpha/beta hydrolase"/>
    <property type="match status" value="1"/>
</dbReference>
<dbReference type="InterPro" id="IPR029058">
    <property type="entry name" value="AB_hydrolase_fold"/>
</dbReference>
<dbReference type="InterPro" id="IPR002925">
    <property type="entry name" value="Dienelactn_hydro"/>
</dbReference>
<dbReference type="InterPro" id="IPR051049">
    <property type="entry name" value="Dienelactone_hydrolase-like"/>
</dbReference>
<dbReference type="PANTHER" id="PTHR46623:SF6">
    <property type="entry name" value="ALPHA_BETA-HYDROLASES SUPERFAMILY PROTEIN"/>
    <property type="match status" value="1"/>
</dbReference>
<dbReference type="PANTHER" id="PTHR46623">
    <property type="entry name" value="CARBOXYMETHYLENEBUTENOLIDASE-RELATED"/>
    <property type="match status" value="1"/>
</dbReference>
<dbReference type="Pfam" id="PF01738">
    <property type="entry name" value="DLH"/>
    <property type="match status" value="1"/>
</dbReference>
<dbReference type="SUPFAM" id="SSF53474">
    <property type="entry name" value="alpha/beta-Hydrolases"/>
    <property type="match status" value="1"/>
</dbReference>
<organism>
    <name type="scientific">Cupriavidus pinatubonensis (strain JMP 134 / LMG 1197)</name>
    <name type="common">Cupriavidus necator (strain JMP 134)</name>
    <dbReference type="NCBI Taxonomy" id="264198"/>
    <lineage>
        <taxon>Bacteria</taxon>
        <taxon>Pseudomonadati</taxon>
        <taxon>Pseudomonadota</taxon>
        <taxon>Betaproteobacteria</taxon>
        <taxon>Burkholderiales</taxon>
        <taxon>Burkholderiaceae</taxon>
        <taxon>Cupriavidus</taxon>
    </lineage>
</organism>
<protein>
    <recommendedName>
        <fullName>Carboxymethylenebutenolidase 2</fullName>
        <ecNumber>3.1.1.45</ecNumber>
    </recommendedName>
    <alternativeName>
        <fullName>Carboxymethylenebutenolidase II</fullName>
    </alternativeName>
    <alternativeName>
        <fullName>Dienelactone hydrolase II</fullName>
        <shortName>DLH II</shortName>
    </alternativeName>
</protein>
<accession>P94136</accession>
<accession>Q46M60</accession>
<comment type="function">
    <text>Ring cleavage of cyclic ester dienelactone to produce maleylacetate.</text>
</comment>
<comment type="catalytic activity">
    <reaction>
        <text>2-(5-oxo-2,5-dihydrofuran-2-ylidene)acetate + H2O = 4-oxohex-2-enedioate + H(+)</text>
        <dbReference type="Rhea" id="RHEA:12372"/>
        <dbReference type="ChEBI" id="CHEBI:12040"/>
        <dbReference type="ChEBI" id="CHEBI:15377"/>
        <dbReference type="ChEBI" id="CHEBI:15378"/>
        <dbReference type="ChEBI" id="CHEBI:57263"/>
        <dbReference type="EC" id="3.1.1.45"/>
    </reaction>
</comment>
<comment type="pathway">
    <text>Aromatic compound metabolism; 3-chlorocatechol degradation.</text>
</comment>
<comment type="subunit">
    <text evidence="1">Monomer.</text>
</comment>
<comment type="miscellaneous">
    <text evidence="1">Carboxymethylenebutenolidase is specific for dienelactone and has no activity toward enol-lactones.</text>
</comment>
<comment type="similarity">
    <text evidence="2">Belongs to the dienelactone hydrolase family.</text>
</comment>
<keyword id="KW-0058">Aromatic hydrocarbons catabolism</keyword>
<keyword id="KW-0378">Hydrolase</keyword>
<keyword id="KW-0614">Plasmid</keyword>
<keyword id="KW-0719">Serine esterase</keyword>
<feature type="chain" id="PRO_0000161575" description="Carboxymethylenebutenolidase 2">
    <location>
        <begin position="1"/>
        <end position="235"/>
    </location>
</feature>
<feature type="active site" evidence="1">
    <location>
        <position position="117"/>
    </location>
</feature>
<feature type="active site" evidence="1">
    <location>
        <position position="173"/>
    </location>
</feature>
<feature type="active site" evidence="1">
    <location>
        <position position="204"/>
    </location>
</feature>
<geneLocation type="plasmid">
    <name>pJP4</name>
</geneLocation>
<geneLocation type="plasmid">
    <name>pPJ4</name>
</geneLocation>
<evidence type="ECO:0000250" key="1"/>
<evidence type="ECO:0000305" key="2"/>
<name>TFDE2_CUPPJ</name>
<gene>
    <name type="primary">tfdEII</name>
    <name type="ordered locus">Reut_D6472</name>
</gene>
<reference key="1">
    <citation type="submission" date="1994-11" db="EMBL/GenBank/DDBJ databases">
        <authorList>
            <person name="van der Meer J.R."/>
        </authorList>
    </citation>
    <scope>NUCLEOTIDE SEQUENCE [GENOMIC DNA]</scope>
    <source>
        <plasmid>pJP4</plasmid>
    </source>
</reference>
<reference key="2">
    <citation type="journal article" date="2004" name="Environ. Microbiol.">
        <title>Genetic organization of the catabolic plasmid pJP4 from Ralstonia eutropha JMP134 (pJP4) reveals mechanisms of adaptation to chloroaromatic pollutants and evolution of specialized chloroaromatic degradation pathways.</title>
        <authorList>
            <person name="Trefault N."/>
            <person name="De la Iglesia R."/>
            <person name="Molina A.M."/>
            <person name="Manzano M."/>
            <person name="Ledger T."/>
            <person name="Perez-Pantoja D."/>
            <person name="Sanchez M.A."/>
            <person name="Stuardo M."/>
            <person name="Gonzalez B."/>
        </authorList>
    </citation>
    <scope>NUCLEOTIDE SEQUENCE [GENOMIC DNA]</scope>
    <source>
        <plasmid>pJP4</plasmid>
    </source>
</reference>
<reference key="3">
    <citation type="journal article" date="2010" name="PLoS ONE">
        <title>The complete multipartite genome sequence of Cupriavidus necator JMP134, a versatile pollutant degrader.</title>
        <authorList>
            <person name="Lykidis A."/>
            <person name="Perez-Pantoja D."/>
            <person name="Ledger T."/>
            <person name="Mavromatis K."/>
            <person name="Anderson I.J."/>
            <person name="Ivanova N.N."/>
            <person name="Hooper S.D."/>
            <person name="Lapidus A."/>
            <person name="Lucas S."/>
            <person name="Gonzalez B."/>
            <person name="Kyrpides N.C."/>
        </authorList>
    </citation>
    <scope>NUCLEOTIDE SEQUENCE [LARGE SCALE GENOMIC DNA]</scope>
    <source>
        <strain>JMP134 / LMG 1197</strain>
        <plasmid>pPJ4</plasmid>
    </source>
</reference>